<organism>
    <name type="scientific">Aquifex aeolicus (strain VF5)</name>
    <dbReference type="NCBI Taxonomy" id="224324"/>
    <lineage>
        <taxon>Bacteria</taxon>
        <taxon>Pseudomonadati</taxon>
        <taxon>Aquificota</taxon>
        <taxon>Aquificia</taxon>
        <taxon>Aquificales</taxon>
        <taxon>Aquificaceae</taxon>
        <taxon>Aquifex</taxon>
    </lineage>
</organism>
<keyword id="KW-1185">Reference proteome</keyword>
<feature type="chain" id="PRO_0000186895" description="Uncharacterized protein aq_1022">
    <location>
        <begin position="1"/>
        <end position="344"/>
    </location>
</feature>
<reference key="1">
    <citation type="journal article" date="1998" name="Nature">
        <title>The complete genome of the hyperthermophilic bacterium Aquifex aeolicus.</title>
        <authorList>
            <person name="Deckert G."/>
            <person name="Warren P.V."/>
            <person name="Gaasterland T."/>
            <person name="Young W.G."/>
            <person name="Lenox A.L."/>
            <person name="Graham D.E."/>
            <person name="Overbeek R."/>
            <person name="Snead M.A."/>
            <person name="Keller M."/>
            <person name="Aujay M."/>
            <person name="Huber R."/>
            <person name="Feldman R.A."/>
            <person name="Short J.M."/>
            <person name="Olsen G.J."/>
            <person name="Swanson R.V."/>
        </authorList>
    </citation>
    <scope>NUCLEOTIDE SEQUENCE [LARGE SCALE GENOMIC DNA]</scope>
    <source>
        <strain>VF5</strain>
    </source>
</reference>
<dbReference type="EMBL" id="AE000657">
    <property type="protein sequence ID" value="AAC07101.1"/>
    <property type="molecule type" value="Genomic_DNA"/>
</dbReference>
<dbReference type="PIR" id="C70388">
    <property type="entry name" value="C70388"/>
</dbReference>
<dbReference type="RefSeq" id="NP_213697.1">
    <property type="nucleotide sequence ID" value="NC_000918.1"/>
</dbReference>
<dbReference type="RefSeq" id="WP_010880635.1">
    <property type="nucleotide sequence ID" value="NC_000918.1"/>
</dbReference>
<dbReference type="SMR" id="O67134"/>
<dbReference type="STRING" id="224324.aq_1022"/>
<dbReference type="EnsemblBacteria" id="AAC07101">
    <property type="protein sequence ID" value="AAC07101"/>
    <property type="gene ID" value="aq_1022"/>
</dbReference>
<dbReference type="KEGG" id="aae:aq_1022"/>
<dbReference type="HOGENOM" id="CLU_805731_0_0_0"/>
<dbReference type="InParanoid" id="O67134"/>
<dbReference type="Proteomes" id="UP000000798">
    <property type="component" value="Chromosome"/>
</dbReference>
<sequence>MLILLDTGIHEVAFFTKYENYTLCTVGRRENSKEEALLGYNLRFFTFGNSSYSYTVETVKRKCLAGVVTKGNINLVLYTGNGIQNVYEFSSNGELMLWQLLKTEKGYFLVGGVKRNNWDAFVAFLDRNFKVKWKKRLDFLEEYFYSVAEKGNKVYAVGRIKRGKNWDALVCIFSDNGKLLESYSIGSEGKDYFRFVKNLGGEVIAVGRSEDKFGDSDFLIYDFKNYYLYDSGEYDYARAVNSYGNSYVIAGETRFKGNNDGIFILLSKNFRPVRAFKIGWENTDAVRFMDNLFFTGYTYSLSFSADLILGVFSEDFEKVDVKKVNRVLKKEKVHLRDFLSSSCV</sequence>
<gene>
    <name type="ordered locus">aq_1022</name>
</gene>
<protein>
    <recommendedName>
        <fullName>Uncharacterized protein aq_1022</fullName>
    </recommendedName>
</protein>
<proteinExistence type="predicted"/>
<accession>O67134</accession>
<name>Y1022_AQUAE</name>